<accession>A4YBE6</accession>
<sequence>MNQDILHRYLFDNADVRGELVQLQESYQQVLDAQAYPPVLQILLGELMAATSLLTATLKFSGDISVQLQGNGPVSLAVINGNNLQQLRGVARWNGELTDNASLADLFGQGYMVITLTPDEGERYQGVVALDKPTLAACVEEYFNQSEQLPTALWLFANGQQAAGMFLQILPSQEDHHQDFEHLSQLTSTIKAEELFTLDAENVLHRLYHQEEVRLFDPIEVSFKCTCSRERSAAAIKTLEQAEVEAILAEEGKIEMGCEYCNANYVFDGIDITTIFANGQNSNIPQ</sequence>
<dbReference type="EMBL" id="CP000681">
    <property type="protein sequence ID" value="ABP77279.1"/>
    <property type="molecule type" value="Genomic_DNA"/>
</dbReference>
<dbReference type="SMR" id="A4YBE6"/>
<dbReference type="STRING" id="319224.Sputcn32_3570"/>
<dbReference type="KEGG" id="spc:Sputcn32_3570"/>
<dbReference type="eggNOG" id="COG1281">
    <property type="taxonomic scope" value="Bacteria"/>
</dbReference>
<dbReference type="HOGENOM" id="CLU_054493_0_0_6"/>
<dbReference type="GO" id="GO:0005737">
    <property type="term" value="C:cytoplasm"/>
    <property type="evidence" value="ECO:0007669"/>
    <property type="project" value="UniProtKB-SubCell"/>
</dbReference>
<dbReference type="GO" id="GO:0044183">
    <property type="term" value="F:protein folding chaperone"/>
    <property type="evidence" value="ECO:0007669"/>
    <property type="project" value="TreeGrafter"/>
</dbReference>
<dbReference type="GO" id="GO:0051082">
    <property type="term" value="F:unfolded protein binding"/>
    <property type="evidence" value="ECO:0007669"/>
    <property type="project" value="UniProtKB-UniRule"/>
</dbReference>
<dbReference type="GO" id="GO:0042026">
    <property type="term" value="P:protein refolding"/>
    <property type="evidence" value="ECO:0007669"/>
    <property type="project" value="TreeGrafter"/>
</dbReference>
<dbReference type="CDD" id="cd00498">
    <property type="entry name" value="Hsp33"/>
    <property type="match status" value="1"/>
</dbReference>
<dbReference type="Gene3D" id="1.10.287.480">
    <property type="entry name" value="helix hairpin bin"/>
    <property type="match status" value="1"/>
</dbReference>
<dbReference type="Gene3D" id="3.55.30.10">
    <property type="entry name" value="Hsp33 domain"/>
    <property type="match status" value="1"/>
</dbReference>
<dbReference type="Gene3D" id="3.90.1280.10">
    <property type="entry name" value="HSP33 redox switch-like"/>
    <property type="match status" value="1"/>
</dbReference>
<dbReference type="HAMAP" id="MF_00117">
    <property type="entry name" value="HslO"/>
    <property type="match status" value="1"/>
</dbReference>
<dbReference type="InterPro" id="IPR000397">
    <property type="entry name" value="Heat_shock_Hsp33"/>
</dbReference>
<dbReference type="InterPro" id="IPR016154">
    <property type="entry name" value="Heat_shock_Hsp33_C"/>
</dbReference>
<dbReference type="InterPro" id="IPR016153">
    <property type="entry name" value="Heat_shock_Hsp33_N"/>
</dbReference>
<dbReference type="InterPro" id="IPR023212">
    <property type="entry name" value="Hsp33_helix_hairpin_bin_dom_sf"/>
</dbReference>
<dbReference type="NCBIfam" id="NF001033">
    <property type="entry name" value="PRK00114.1"/>
    <property type="match status" value="1"/>
</dbReference>
<dbReference type="PANTHER" id="PTHR30111">
    <property type="entry name" value="33 KDA CHAPERONIN"/>
    <property type="match status" value="1"/>
</dbReference>
<dbReference type="PANTHER" id="PTHR30111:SF1">
    <property type="entry name" value="33 KDA CHAPERONIN"/>
    <property type="match status" value="1"/>
</dbReference>
<dbReference type="Pfam" id="PF01430">
    <property type="entry name" value="HSP33"/>
    <property type="match status" value="1"/>
</dbReference>
<dbReference type="PIRSF" id="PIRSF005261">
    <property type="entry name" value="Heat_shock_Hsp33"/>
    <property type="match status" value="1"/>
</dbReference>
<dbReference type="SUPFAM" id="SSF64397">
    <property type="entry name" value="Hsp33 domain"/>
    <property type="match status" value="1"/>
</dbReference>
<dbReference type="SUPFAM" id="SSF118352">
    <property type="entry name" value="HSP33 redox switch-like"/>
    <property type="match status" value="1"/>
</dbReference>
<keyword id="KW-0143">Chaperone</keyword>
<keyword id="KW-0963">Cytoplasm</keyword>
<keyword id="KW-1015">Disulfide bond</keyword>
<keyword id="KW-0676">Redox-active center</keyword>
<keyword id="KW-0862">Zinc</keyword>
<name>HSLO_SHEPC</name>
<feature type="chain" id="PRO_1000015568" description="33 kDa chaperonin">
    <location>
        <begin position="1"/>
        <end position="286"/>
    </location>
</feature>
<feature type="disulfide bond" description="Redox-active" evidence="1">
    <location>
        <begin position="225"/>
        <end position="227"/>
    </location>
</feature>
<feature type="disulfide bond" description="Redox-active" evidence="1">
    <location>
        <begin position="258"/>
        <end position="261"/>
    </location>
</feature>
<organism>
    <name type="scientific">Shewanella putrefaciens (strain CN-32 / ATCC BAA-453)</name>
    <dbReference type="NCBI Taxonomy" id="319224"/>
    <lineage>
        <taxon>Bacteria</taxon>
        <taxon>Pseudomonadati</taxon>
        <taxon>Pseudomonadota</taxon>
        <taxon>Gammaproteobacteria</taxon>
        <taxon>Alteromonadales</taxon>
        <taxon>Shewanellaceae</taxon>
        <taxon>Shewanella</taxon>
    </lineage>
</organism>
<comment type="function">
    <text evidence="1">Redox regulated molecular chaperone. Protects both thermally unfolding and oxidatively damaged proteins from irreversible aggregation. Plays an important role in the bacterial defense system toward oxidative stress.</text>
</comment>
<comment type="subcellular location">
    <subcellularLocation>
        <location evidence="1">Cytoplasm</location>
    </subcellularLocation>
</comment>
<comment type="PTM">
    <text evidence="1">Under oxidizing conditions two disulfide bonds are formed involving the reactive cysteines. Under reducing conditions zinc is bound to the reactive cysteines and the protein is inactive.</text>
</comment>
<comment type="similarity">
    <text evidence="1">Belongs to the HSP33 family.</text>
</comment>
<reference key="1">
    <citation type="submission" date="2007-04" db="EMBL/GenBank/DDBJ databases">
        <title>Complete sequence of Shewanella putrefaciens CN-32.</title>
        <authorList>
            <consortium name="US DOE Joint Genome Institute"/>
            <person name="Copeland A."/>
            <person name="Lucas S."/>
            <person name="Lapidus A."/>
            <person name="Barry K."/>
            <person name="Detter J.C."/>
            <person name="Glavina del Rio T."/>
            <person name="Hammon N."/>
            <person name="Israni S."/>
            <person name="Dalin E."/>
            <person name="Tice H."/>
            <person name="Pitluck S."/>
            <person name="Chain P."/>
            <person name="Malfatti S."/>
            <person name="Shin M."/>
            <person name="Vergez L."/>
            <person name="Schmutz J."/>
            <person name="Larimer F."/>
            <person name="Land M."/>
            <person name="Hauser L."/>
            <person name="Kyrpides N."/>
            <person name="Mikhailova N."/>
            <person name="Romine M.F."/>
            <person name="Fredrickson J."/>
            <person name="Tiedje J."/>
            <person name="Richardson P."/>
        </authorList>
    </citation>
    <scope>NUCLEOTIDE SEQUENCE [LARGE SCALE GENOMIC DNA]</scope>
    <source>
        <strain>CN-32 / ATCC BAA-453</strain>
    </source>
</reference>
<protein>
    <recommendedName>
        <fullName evidence="1">33 kDa chaperonin</fullName>
    </recommendedName>
    <alternativeName>
        <fullName evidence="1">Heat shock protein 33 homolog</fullName>
        <shortName evidence="1">HSP33</shortName>
    </alternativeName>
</protein>
<evidence type="ECO:0000255" key="1">
    <source>
        <dbReference type="HAMAP-Rule" id="MF_00117"/>
    </source>
</evidence>
<gene>
    <name evidence="1" type="primary">hslO</name>
    <name type="ordered locus">Sputcn32_3570</name>
</gene>
<proteinExistence type="inferred from homology"/>